<protein>
    <recommendedName>
        <fullName evidence="5">Probable hydroxyacylglutathione hydrolase glo2</fullName>
        <ecNumber evidence="2">3.1.2.6</ecNumber>
    </recommendedName>
    <alternativeName>
        <fullName>Glyoxalase II</fullName>
        <shortName>Glx II</shortName>
    </alternativeName>
</protein>
<gene>
    <name type="primary">glo2</name>
    <name type="ORF">SPAC824.07</name>
</gene>
<reference key="1">
    <citation type="journal article" date="2002" name="Nature">
        <title>The genome sequence of Schizosaccharomyces pombe.</title>
        <authorList>
            <person name="Wood V."/>
            <person name="Gwilliam R."/>
            <person name="Rajandream M.A."/>
            <person name="Lyne M.H."/>
            <person name="Lyne R."/>
            <person name="Stewart A."/>
            <person name="Sgouros J.G."/>
            <person name="Peat N."/>
            <person name="Hayles J."/>
            <person name="Baker S.G."/>
            <person name="Basham D."/>
            <person name="Bowman S."/>
            <person name="Brooks K."/>
            <person name="Brown D."/>
            <person name="Brown S."/>
            <person name="Chillingworth T."/>
            <person name="Churcher C.M."/>
            <person name="Collins M."/>
            <person name="Connor R."/>
            <person name="Cronin A."/>
            <person name="Davis P."/>
            <person name="Feltwell T."/>
            <person name="Fraser A."/>
            <person name="Gentles S."/>
            <person name="Goble A."/>
            <person name="Hamlin N."/>
            <person name="Harris D.E."/>
            <person name="Hidalgo J."/>
            <person name="Hodgson G."/>
            <person name="Holroyd S."/>
            <person name="Hornsby T."/>
            <person name="Howarth S."/>
            <person name="Huckle E.J."/>
            <person name="Hunt S."/>
            <person name="Jagels K."/>
            <person name="James K.D."/>
            <person name="Jones L."/>
            <person name="Jones M."/>
            <person name="Leather S."/>
            <person name="McDonald S."/>
            <person name="McLean J."/>
            <person name="Mooney P."/>
            <person name="Moule S."/>
            <person name="Mungall K.L."/>
            <person name="Murphy L.D."/>
            <person name="Niblett D."/>
            <person name="Odell C."/>
            <person name="Oliver K."/>
            <person name="O'Neil S."/>
            <person name="Pearson D."/>
            <person name="Quail M.A."/>
            <person name="Rabbinowitsch E."/>
            <person name="Rutherford K.M."/>
            <person name="Rutter S."/>
            <person name="Saunders D."/>
            <person name="Seeger K."/>
            <person name="Sharp S."/>
            <person name="Skelton J."/>
            <person name="Simmonds M.N."/>
            <person name="Squares R."/>
            <person name="Squares S."/>
            <person name="Stevens K."/>
            <person name="Taylor K."/>
            <person name="Taylor R.G."/>
            <person name="Tivey A."/>
            <person name="Walsh S.V."/>
            <person name="Warren T."/>
            <person name="Whitehead S."/>
            <person name="Woodward J.R."/>
            <person name="Volckaert G."/>
            <person name="Aert R."/>
            <person name="Robben J."/>
            <person name="Grymonprez B."/>
            <person name="Weltjens I."/>
            <person name="Vanstreels E."/>
            <person name="Rieger M."/>
            <person name="Schaefer M."/>
            <person name="Mueller-Auer S."/>
            <person name="Gabel C."/>
            <person name="Fuchs M."/>
            <person name="Duesterhoeft A."/>
            <person name="Fritzc C."/>
            <person name="Holzer E."/>
            <person name="Moestl D."/>
            <person name="Hilbert H."/>
            <person name="Borzym K."/>
            <person name="Langer I."/>
            <person name="Beck A."/>
            <person name="Lehrach H."/>
            <person name="Reinhardt R."/>
            <person name="Pohl T.M."/>
            <person name="Eger P."/>
            <person name="Zimmermann W."/>
            <person name="Wedler H."/>
            <person name="Wambutt R."/>
            <person name="Purnelle B."/>
            <person name="Goffeau A."/>
            <person name="Cadieu E."/>
            <person name="Dreano S."/>
            <person name="Gloux S."/>
            <person name="Lelaure V."/>
            <person name="Mottier S."/>
            <person name="Galibert F."/>
            <person name="Aves S.J."/>
            <person name="Xiang Z."/>
            <person name="Hunt C."/>
            <person name="Moore K."/>
            <person name="Hurst S.M."/>
            <person name="Lucas M."/>
            <person name="Rochet M."/>
            <person name="Gaillardin C."/>
            <person name="Tallada V.A."/>
            <person name="Garzon A."/>
            <person name="Thode G."/>
            <person name="Daga R.R."/>
            <person name="Cruzado L."/>
            <person name="Jimenez J."/>
            <person name="Sanchez M."/>
            <person name="del Rey F."/>
            <person name="Benito J."/>
            <person name="Dominguez A."/>
            <person name="Revuelta J.L."/>
            <person name="Moreno S."/>
            <person name="Armstrong J."/>
            <person name="Forsburg S.L."/>
            <person name="Cerutti L."/>
            <person name="Lowe T."/>
            <person name="McCombie W.R."/>
            <person name="Paulsen I."/>
            <person name="Potashkin J."/>
            <person name="Shpakovski G.V."/>
            <person name="Ussery D."/>
            <person name="Barrell B.G."/>
            <person name="Nurse P."/>
        </authorList>
    </citation>
    <scope>NUCLEOTIDE SEQUENCE [LARGE SCALE GENOMIC DNA]</scope>
    <source>
        <strain>972 / ATCC 24843</strain>
    </source>
</reference>
<reference key="2">
    <citation type="journal article" date="2006" name="Nat. Biotechnol.">
        <title>ORFeome cloning and global analysis of protein localization in the fission yeast Schizosaccharomyces pombe.</title>
        <authorList>
            <person name="Matsuyama A."/>
            <person name="Arai R."/>
            <person name="Yashiroda Y."/>
            <person name="Shirai A."/>
            <person name="Kamata A."/>
            <person name="Sekido S."/>
            <person name="Kobayashi Y."/>
            <person name="Hashimoto A."/>
            <person name="Hamamoto M."/>
            <person name="Hiraoka Y."/>
            <person name="Horinouchi S."/>
            <person name="Yoshida M."/>
        </authorList>
    </citation>
    <scope>SUBCELLULAR LOCATION [LARGE SCALE ANALYSIS]</scope>
</reference>
<accession>Q9UT36</accession>
<keyword id="KW-0963">Cytoplasm</keyword>
<keyword id="KW-0378">Hydrolase</keyword>
<keyword id="KW-0479">Metal-binding</keyword>
<keyword id="KW-0539">Nucleus</keyword>
<keyword id="KW-1185">Reference proteome</keyword>
<keyword id="KW-0862">Zinc</keyword>
<comment type="function">
    <text evidence="2">Thiolesterase that catalyzes the hydrolysis of S-D-lactoylglutathione to form glutathione and D-lactic acid. Involved in the metabolism of methylglyoxal, a toxic compound for yeast proliferation, by converting methylglyoxal to lactate via S-D-lactoylglutathione by sequential enzyme reactions catalyzed by glyoxalase I and glyoxalase II.</text>
</comment>
<comment type="catalytic activity">
    <reaction evidence="2">
        <text>an S-(2-hydroxyacyl)glutathione + H2O = a 2-hydroxy carboxylate + glutathione + H(+)</text>
        <dbReference type="Rhea" id="RHEA:21864"/>
        <dbReference type="ChEBI" id="CHEBI:15377"/>
        <dbReference type="ChEBI" id="CHEBI:15378"/>
        <dbReference type="ChEBI" id="CHEBI:57925"/>
        <dbReference type="ChEBI" id="CHEBI:58896"/>
        <dbReference type="ChEBI" id="CHEBI:71261"/>
        <dbReference type="EC" id="3.1.2.6"/>
    </reaction>
</comment>
<comment type="catalytic activity">
    <reaction evidence="2">
        <text>(R)-S-lactoylglutathione + H2O = (R)-lactate + glutathione + H(+)</text>
        <dbReference type="Rhea" id="RHEA:25245"/>
        <dbReference type="ChEBI" id="CHEBI:15377"/>
        <dbReference type="ChEBI" id="CHEBI:15378"/>
        <dbReference type="ChEBI" id="CHEBI:16004"/>
        <dbReference type="ChEBI" id="CHEBI:57474"/>
        <dbReference type="ChEBI" id="CHEBI:57925"/>
        <dbReference type="EC" id="3.1.2.6"/>
    </reaction>
</comment>
<comment type="cofactor">
    <cofactor evidence="3">
        <name>Zn(2+)</name>
        <dbReference type="ChEBI" id="CHEBI:29105"/>
    </cofactor>
    <text evidence="3">Binds 2 Zn(2+) ions per subunit.</text>
</comment>
<comment type="pathway">
    <text evidence="2">Secondary metabolite metabolism; methylglyoxal degradation; (R)-lactate from methylglyoxal: step 2/2.</text>
</comment>
<comment type="subcellular location">
    <subcellularLocation>
        <location evidence="4">Cytoplasm</location>
    </subcellularLocation>
    <subcellularLocation>
        <location evidence="4">Nucleus</location>
    </subcellularLocation>
</comment>
<comment type="similarity">
    <text evidence="5">Belongs to the metallo-beta-lactamase superfamily. Glyoxalase II family.</text>
</comment>
<evidence type="ECO:0000250" key="1"/>
<evidence type="ECO:0000250" key="2">
    <source>
        <dbReference type="UniProtKB" id="Q05584"/>
    </source>
</evidence>
<evidence type="ECO:0000250" key="3">
    <source>
        <dbReference type="UniProtKB" id="Q16775"/>
    </source>
</evidence>
<evidence type="ECO:0000269" key="4">
    <source>
    </source>
</evidence>
<evidence type="ECO:0000305" key="5"/>
<name>GLO21_SCHPO</name>
<feature type="chain" id="PRO_0000337689" description="Probable hydroxyacylglutathione hydrolase glo2">
    <location>
        <begin position="1"/>
        <end position="256"/>
    </location>
</feature>
<feature type="binding site" evidence="3">
    <location>
        <position position="63"/>
    </location>
    <ligand>
        <name>Zn(2+)</name>
        <dbReference type="ChEBI" id="CHEBI:29105"/>
        <label>1</label>
    </ligand>
</feature>
<feature type="binding site" evidence="3">
    <location>
        <position position="65"/>
    </location>
    <ligand>
        <name>Zn(2+)</name>
        <dbReference type="ChEBI" id="CHEBI:29105"/>
        <label>1</label>
    </ligand>
</feature>
<feature type="binding site" evidence="3">
    <location>
        <position position="67"/>
    </location>
    <ligand>
        <name>Zn(2+)</name>
        <dbReference type="ChEBI" id="CHEBI:29105"/>
        <label>2</label>
    </ligand>
</feature>
<feature type="binding site" evidence="3">
    <location>
        <position position="68"/>
    </location>
    <ligand>
        <name>Zn(2+)</name>
        <dbReference type="ChEBI" id="CHEBI:29105"/>
        <label>2</label>
    </ligand>
</feature>
<feature type="binding site" evidence="3">
    <location>
        <position position="118"/>
    </location>
    <ligand>
        <name>Zn(2+)</name>
        <dbReference type="ChEBI" id="CHEBI:29105"/>
        <label>1</label>
    </ligand>
</feature>
<feature type="binding site" evidence="3">
    <location>
        <position position="139"/>
    </location>
    <ligand>
        <name>Zn(2+)</name>
        <dbReference type="ChEBI" id="CHEBI:29105"/>
        <label>1</label>
    </ligand>
</feature>
<feature type="binding site" evidence="3">
    <location>
        <position position="139"/>
    </location>
    <ligand>
        <name>Zn(2+)</name>
        <dbReference type="ChEBI" id="CHEBI:29105"/>
        <label>2</label>
    </ligand>
</feature>
<feature type="binding site" evidence="1">
    <location>
        <position position="148"/>
    </location>
    <ligand>
        <name>substrate</name>
    </ligand>
</feature>
<feature type="binding site" evidence="3">
    <location>
        <begin position="178"/>
        <end position="180"/>
    </location>
    <ligand>
        <name>substrate</name>
    </ligand>
</feature>
<feature type="binding site" evidence="3">
    <location>
        <position position="178"/>
    </location>
    <ligand>
        <name>Zn(2+)</name>
        <dbReference type="ChEBI" id="CHEBI:29105"/>
        <label>2</label>
    </ligand>
</feature>
<feature type="binding site" evidence="3">
    <location>
        <begin position="250"/>
        <end position="253"/>
    </location>
    <ligand>
        <name>substrate</name>
    </ligand>
</feature>
<organism>
    <name type="scientific">Schizosaccharomyces pombe (strain 972 / ATCC 24843)</name>
    <name type="common">Fission yeast</name>
    <dbReference type="NCBI Taxonomy" id="284812"/>
    <lineage>
        <taxon>Eukaryota</taxon>
        <taxon>Fungi</taxon>
        <taxon>Dikarya</taxon>
        <taxon>Ascomycota</taxon>
        <taxon>Taphrinomycotina</taxon>
        <taxon>Schizosaccharomycetes</taxon>
        <taxon>Schizosaccharomycetales</taxon>
        <taxon>Schizosaccharomycetaceae</taxon>
        <taxon>Schizosaccharomyces</taxon>
    </lineage>
</organism>
<proteinExistence type="inferred from homology"/>
<sequence length="256" mass="28483">MSFHITPIWMWKGTGNNYAYLLTCDKTKITAIVDPAEPESVIPVIKEKTAKKEIDLQYILTTHHHYDHAGGNEDILSYFPSLKVYGGKNASGVTYTPKDKEIFKVGEVQVEALHTPCHTQDSICYYVSSPSKRAVFTGDTLFTSGCGRFFEGDAKQMDYALNHVLAALPDDTVTYPGHEYTKSNAKFSSTIFSTPELTKLVDFCKNHESTTGHFTIGDEKKFNPFMCLGLESVQKAVGSSDPITVMKKLRDMKNAA</sequence>
<dbReference type="EC" id="3.1.2.6" evidence="2"/>
<dbReference type="EMBL" id="CU329670">
    <property type="protein sequence ID" value="CAB57337.1"/>
    <property type="molecule type" value="Genomic_DNA"/>
</dbReference>
<dbReference type="PIR" id="T39108">
    <property type="entry name" value="T39108"/>
</dbReference>
<dbReference type="RefSeq" id="NP_593446.1">
    <property type="nucleotide sequence ID" value="NM_001018879.2"/>
</dbReference>
<dbReference type="SMR" id="Q9UT36"/>
<dbReference type="BioGRID" id="278908">
    <property type="interactions" value="1"/>
</dbReference>
<dbReference type="FunCoup" id="Q9UT36">
    <property type="interactions" value="119"/>
</dbReference>
<dbReference type="STRING" id="284812.Q9UT36"/>
<dbReference type="iPTMnet" id="Q9UT36"/>
<dbReference type="PaxDb" id="4896-SPAC824.07.1"/>
<dbReference type="EnsemblFungi" id="SPAC824.07.1">
    <property type="protein sequence ID" value="SPAC824.07.1:pep"/>
    <property type="gene ID" value="SPAC824.07"/>
</dbReference>
<dbReference type="GeneID" id="2542447"/>
<dbReference type="KEGG" id="spo:2542447"/>
<dbReference type="PomBase" id="SPAC824.07">
    <property type="gene designation" value="glo2"/>
</dbReference>
<dbReference type="VEuPathDB" id="FungiDB:SPAC824.07"/>
<dbReference type="eggNOG" id="KOG0813">
    <property type="taxonomic scope" value="Eukaryota"/>
</dbReference>
<dbReference type="HOGENOM" id="CLU_030571_4_0_1"/>
<dbReference type="InParanoid" id="Q9UT36"/>
<dbReference type="OMA" id="NYIWLLQ"/>
<dbReference type="PhylomeDB" id="Q9UT36"/>
<dbReference type="Reactome" id="R-SPO-70268">
    <property type="pathway name" value="Pyruvate metabolism"/>
</dbReference>
<dbReference type="UniPathway" id="UPA00619">
    <property type="reaction ID" value="UER00676"/>
</dbReference>
<dbReference type="PRO" id="PR:Q9UT36"/>
<dbReference type="Proteomes" id="UP000002485">
    <property type="component" value="Chromosome I"/>
</dbReference>
<dbReference type="GO" id="GO:0005829">
    <property type="term" value="C:cytosol"/>
    <property type="evidence" value="ECO:0007005"/>
    <property type="project" value="PomBase"/>
</dbReference>
<dbReference type="GO" id="GO:0005634">
    <property type="term" value="C:nucleus"/>
    <property type="evidence" value="ECO:0007005"/>
    <property type="project" value="PomBase"/>
</dbReference>
<dbReference type="GO" id="GO:0004416">
    <property type="term" value="F:hydroxyacylglutathione hydrolase activity"/>
    <property type="evidence" value="ECO:0000318"/>
    <property type="project" value="GO_Central"/>
</dbReference>
<dbReference type="GO" id="GO:0046872">
    <property type="term" value="F:metal ion binding"/>
    <property type="evidence" value="ECO:0007669"/>
    <property type="project" value="UniProtKB-KW"/>
</dbReference>
<dbReference type="GO" id="GO:1990748">
    <property type="term" value="P:cellular detoxification"/>
    <property type="evidence" value="ECO:0000303"/>
    <property type="project" value="PomBase"/>
</dbReference>
<dbReference type="GO" id="GO:0019243">
    <property type="term" value="P:methylglyoxal catabolic process to D-lactate via S-lactoyl-glutathione"/>
    <property type="evidence" value="ECO:0000266"/>
    <property type="project" value="PomBase"/>
</dbReference>
<dbReference type="CDD" id="cd07723">
    <property type="entry name" value="hydroxyacylglutathione_hydrolase_MBL-fold"/>
    <property type="match status" value="1"/>
</dbReference>
<dbReference type="FunFam" id="3.60.15.10:FF:000045">
    <property type="entry name" value="Hydroxyacylglutathione hydrolase"/>
    <property type="match status" value="1"/>
</dbReference>
<dbReference type="Gene3D" id="3.60.15.10">
    <property type="entry name" value="Ribonuclease Z/Hydroxyacylglutathione hydrolase-like"/>
    <property type="match status" value="1"/>
</dbReference>
<dbReference type="InterPro" id="IPR035680">
    <property type="entry name" value="Clx_II_MBL"/>
</dbReference>
<dbReference type="InterPro" id="IPR032282">
    <property type="entry name" value="HAGH_C"/>
</dbReference>
<dbReference type="InterPro" id="IPR001279">
    <property type="entry name" value="Metallo-B-lactamas"/>
</dbReference>
<dbReference type="InterPro" id="IPR036866">
    <property type="entry name" value="RibonucZ/Hydroxyglut_hydro"/>
</dbReference>
<dbReference type="PANTHER" id="PTHR11935">
    <property type="entry name" value="BETA LACTAMASE DOMAIN"/>
    <property type="match status" value="1"/>
</dbReference>
<dbReference type="PANTHER" id="PTHR11935:SF94">
    <property type="entry name" value="TENZING NORGAY, ISOFORM C"/>
    <property type="match status" value="1"/>
</dbReference>
<dbReference type="Pfam" id="PF16123">
    <property type="entry name" value="HAGH_C"/>
    <property type="match status" value="1"/>
</dbReference>
<dbReference type="Pfam" id="PF00753">
    <property type="entry name" value="Lactamase_B"/>
    <property type="match status" value="1"/>
</dbReference>
<dbReference type="SMART" id="SM00849">
    <property type="entry name" value="Lactamase_B"/>
    <property type="match status" value="1"/>
</dbReference>
<dbReference type="SUPFAM" id="SSF56281">
    <property type="entry name" value="Metallo-hydrolase/oxidoreductase"/>
    <property type="match status" value="1"/>
</dbReference>